<sequence>MARNKINNDKNIAANEEADIPIPRVLPSNVQAEQMLLGAILTNNELLSYVSEFLRSEHFFEPIHQKIYNAIEKITEKGLIATPITLRSMLTQDELFQEIEGAEYLAKLITMSMMVINPVDYGKIIYDLAIKRNLINIGEEVVNDAYNSSLEIEAREQIEHAEAKLYDLASESLNEKSFTRIGIPISESLASINRAMKNNDHVIGISTGLLDLDNKLFGFHNSDLLILAGRPSMGKTAFAINLALNACNNMRLKNIRDNQEIQSVGFFSLEMSSEQLTTRLLSMCAEIDSTSLRTGILGEEKYNRLRKEANTLSELQFFIDDTPALSISAIRTRARRMKRKHNLGILFIDYLQLIRGVSKSENRVSEISEITQGLKAIAKELNIPVIALSQLSRAVELREDKKPMLSDLRESGTIEQDADIVMFIYREEYYLTRKEPAAGDAKHAEWLDKLNKVYNIADIIVAKHRNGPVGNVPLYYDSQFSKFGNLEKRTFSSN</sequence>
<gene>
    <name type="primary">dnaB</name>
    <name type="ordered locus">RF_0860</name>
</gene>
<comment type="function">
    <text evidence="1">The main replicative DNA helicase, it participates in initiation and elongation during chromosome replication. Travels ahead of the DNA replisome, separating dsDNA into templates for DNA synthesis. A processive ATP-dependent 5'-3' DNA helicase it has DNA-dependent ATPase activity.</text>
</comment>
<comment type="catalytic activity">
    <reaction evidence="1">
        <text>Couples ATP hydrolysis with the unwinding of duplex DNA at the replication fork by translocating in the 5'-3' direction. This creates two antiparallel DNA single strands (ssDNA). The leading ssDNA polymer is the template for DNA polymerase III holoenzyme which synthesizes a continuous strand.</text>
        <dbReference type="EC" id="5.6.2.3"/>
    </reaction>
</comment>
<comment type="catalytic activity">
    <reaction evidence="1">
        <text>ATP + H2O = ADP + phosphate + H(+)</text>
        <dbReference type="Rhea" id="RHEA:13065"/>
        <dbReference type="ChEBI" id="CHEBI:15377"/>
        <dbReference type="ChEBI" id="CHEBI:15378"/>
        <dbReference type="ChEBI" id="CHEBI:30616"/>
        <dbReference type="ChEBI" id="CHEBI:43474"/>
        <dbReference type="ChEBI" id="CHEBI:456216"/>
        <dbReference type="EC" id="5.6.2.3"/>
    </reaction>
</comment>
<comment type="subunit">
    <text evidence="1">Homohexamer.</text>
</comment>
<comment type="similarity">
    <text evidence="3">Belongs to the helicase family. DnaB subfamily.</text>
</comment>
<accession>Q4UL62</accession>
<evidence type="ECO:0000250" key="1">
    <source>
        <dbReference type="UniProtKB" id="P0ACB0"/>
    </source>
</evidence>
<evidence type="ECO:0000255" key="2">
    <source>
        <dbReference type="PROSITE-ProRule" id="PRU00596"/>
    </source>
</evidence>
<evidence type="ECO:0000305" key="3"/>
<name>DNAB_RICFE</name>
<feature type="chain" id="PRO_0000281067" description="Replicative DNA helicase DnaB">
    <location>
        <begin position="1"/>
        <end position="494"/>
    </location>
</feature>
<feature type="domain" description="SF4 helicase" evidence="2">
    <location>
        <begin position="198"/>
        <end position="490"/>
    </location>
</feature>
<feature type="binding site" evidence="2">
    <location>
        <begin position="229"/>
        <end position="236"/>
    </location>
    <ligand>
        <name>ATP</name>
        <dbReference type="ChEBI" id="CHEBI:30616"/>
    </ligand>
</feature>
<proteinExistence type="inferred from homology"/>
<organism>
    <name type="scientific">Rickettsia felis (strain ATCC VR-1525 / URRWXCal2)</name>
    <name type="common">Rickettsia azadi</name>
    <dbReference type="NCBI Taxonomy" id="315456"/>
    <lineage>
        <taxon>Bacteria</taxon>
        <taxon>Pseudomonadati</taxon>
        <taxon>Pseudomonadota</taxon>
        <taxon>Alphaproteobacteria</taxon>
        <taxon>Rickettsiales</taxon>
        <taxon>Rickettsiaceae</taxon>
        <taxon>Rickettsieae</taxon>
        <taxon>Rickettsia</taxon>
        <taxon>spotted fever group</taxon>
    </lineage>
</organism>
<reference key="1">
    <citation type="journal article" date="2005" name="PLoS Biol.">
        <title>The genome sequence of Rickettsia felis identifies the first putative conjugative plasmid in an obligate intracellular parasite.</title>
        <authorList>
            <person name="Ogata H."/>
            <person name="Renesto P."/>
            <person name="Audic S."/>
            <person name="Robert C."/>
            <person name="Blanc G."/>
            <person name="Fournier P.-E."/>
            <person name="Parinello H."/>
            <person name="Claverie J.-M."/>
            <person name="Raoult D."/>
        </authorList>
    </citation>
    <scope>NUCLEOTIDE SEQUENCE [LARGE SCALE GENOMIC DNA]</scope>
    <source>
        <strain>ATCC VR-1525 / URRWXCal2</strain>
    </source>
</reference>
<dbReference type="EC" id="5.6.2.3" evidence="1"/>
<dbReference type="EMBL" id="CP000053">
    <property type="protein sequence ID" value="AAY61711.1"/>
    <property type="molecule type" value="Genomic_DNA"/>
</dbReference>
<dbReference type="SMR" id="Q4UL62"/>
<dbReference type="STRING" id="315456.RF_0860"/>
<dbReference type="KEGG" id="rfe:RF_0860"/>
<dbReference type="eggNOG" id="COG0305">
    <property type="taxonomic scope" value="Bacteria"/>
</dbReference>
<dbReference type="HOGENOM" id="CLU_005373_0_2_5"/>
<dbReference type="OrthoDB" id="9773982at2"/>
<dbReference type="Proteomes" id="UP000008548">
    <property type="component" value="Chromosome"/>
</dbReference>
<dbReference type="GO" id="GO:0005829">
    <property type="term" value="C:cytosol"/>
    <property type="evidence" value="ECO:0007669"/>
    <property type="project" value="TreeGrafter"/>
</dbReference>
<dbReference type="GO" id="GO:1990077">
    <property type="term" value="C:primosome complex"/>
    <property type="evidence" value="ECO:0007669"/>
    <property type="project" value="UniProtKB-KW"/>
</dbReference>
<dbReference type="GO" id="GO:0005524">
    <property type="term" value="F:ATP binding"/>
    <property type="evidence" value="ECO:0007669"/>
    <property type="project" value="UniProtKB-KW"/>
</dbReference>
<dbReference type="GO" id="GO:0016887">
    <property type="term" value="F:ATP hydrolysis activity"/>
    <property type="evidence" value="ECO:0007669"/>
    <property type="project" value="RHEA"/>
</dbReference>
<dbReference type="GO" id="GO:0003677">
    <property type="term" value="F:DNA binding"/>
    <property type="evidence" value="ECO:0007669"/>
    <property type="project" value="UniProtKB-KW"/>
</dbReference>
<dbReference type="GO" id="GO:0003678">
    <property type="term" value="F:DNA helicase activity"/>
    <property type="evidence" value="ECO:0007669"/>
    <property type="project" value="InterPro"/>
</dbReference>
<dbReference type="GO" id="GO:0006269">
    <property type="term" value="P:DNA replication, synthesis of primer"/>
    <property type="evidence" value="ECO:0007669"/>
    <property type="project" value="UniProtKB-KW"/>
</dbReference>
<dbReference type="CDD" id="cd00984">
    <property type="entry name" value="DnaB_C"/>
    <property type="match status" value="1"/>
</dbReference>
<dbReference type="Gene3D" id="1.10.860.10">
    <property type="entry name" value="DNAb Helicase, Chain A"/>
    <property type="match status" value="1"/>
</dbReference>
<dbReference type="Gene3D" id="3.40.50.300">
    <property type="entry name" value="P-loop containing nucleotide triphosphate hydrolases"/>
    <property type="match status" value="1"/>
</dbReference>
<dbReference type="InterPro" id="IPR036185">
    <property type="entry name" value="DNA_heli_DnaB-like_N_sf"/>
</dbReference>
<dbReference type="InterPro" id="IPR007692">
    <property type="entry name" value="DNA_helicase_DnaB"/>
</dbReference>
<dbReference type="InterPro" id="IPR007694">
    <property type="entry name" value="DNA_helicase_DnaB-like_C"/>
</dbReference>
<dbReference type="InterPro" id="IPR007693">
    <property type="entry name" value="DNA_helicase_DnaB-like_N"/>
</dbReference>
<dbReference type="InterPro" id="IPR016136">
    <property type="entry name" value="DNA_helicase_N/primase_C"/>
</dbReference>
<dbReference type="InterPro" id="IPR027417">
    <property type="entry name" value="P-loop_NTPase"/>
</dbReference>
<dbReference type="NCBIfam" id="TIGR00665">
    <property type="entry name" value="DnaB"/>
    <property type="match status" value="1"/>
</dbReference>
<dbReference type="NCBIfam" id="NF006606">
    <property type="entry name" value="PRK09165.1"/>
    <property type="match status" value="1"/>
</dbReference>
<dbReference type="PANTHER" id="PTHR30153:SF2">
    <property type="entry name" value="REPLICATIVE DNA HELICASE"/>
    <property type="match status" value="1"/>
</dbReference>
<dbReference type="PANTHER" id="PTHR30153">
    <property type="entry name" value="REPLICATIVE DNA HELICASE DNAB"/>
    <property type="match status" value="1"/>
</dbReference>
<dbReference type="Pfam" id="PF00772">
    <property type="entry name" value="DnaB"/>
    <property type="match status" value="1"/>
</dbReference>
<dbReference type="Pfam" id="PF03796">
    <property type="entry name" value="DnaB_C"/>
    <property type="match status" value="1"/>
</dbReference>
<dbReference type="SUPFAM" id="SSF48024">
    <property type="entry name" value="N-terminal domain of DnaB helicase"/>
    <property type="match status" value="1"/>
</dbReference>
<dbReference type="SUPFAM" id="SSF52540">
    <property type="entry name" value="P-loop containing nucleoside triphosphate hydrolases"/>
    <property type="match status" value="1"/>
</dbReference>
<dbReference type="PROSITE" id="PS51199">
    <property type="entry name" value="SF4_HELICASE"/>
    <property type="match status" value="1"/>
</dbReference>
<protein>
    <recommendedName>
        <fullName>Replicative DNA helicase DnaB</fullName>
        <ecNumber evidence="1">5.6.2.3</ecNumber>
    </recommendedName>
    <alternativeName>
        <fullName evidence="3">DNA 5'-3' helicase DnaB</fullName>
    </alternativeName>
</protein>
<keyword id="KW-0067">ATP-binding</keyword>
<keyword id="KW-0235">DNA replication</keyword>
<keyword id="KW-0238">DNA-binding</keyword>
<keyword id="KW-0347">Helicase</keyword>
<keyword id="KW-0378">Hydrolase</keyword>
<keyword id="KW-0413">Isomerase</keyword>
<keyword id="KW-0547">Nucleotide-binding</keyword>
<keyword id="KW-0639">Primosome</keyword>